<organism>
    <name type="scientific">Staphylococcus aureus (strain MW2)</name>
    <dbReference type="NCBI Taxonomy" id="196620"/>
    <lineage>
        <taxon>Bacteria</taxon>
        <taxon>Bacillati</taxon>
        <taxon>Bacillota</taxon>
        <taxon>Bacilli</taxon>
        <taxon>Bacillales</taxon>
        <taxon>Staphylococcaceae</taxon>
        <taxon>Staphylococcus</taxon>
    </lineage>
</organism>
<keyword id="KW-0963">Cytoplasm</keyword>
<keyword id="KW-0238">DNA-binding</keyword>
<keyword id="KW-0464">Manganese</keyword>
<keyword id="KW-0479">Metal-binding</keyword>
<keyword id="KW-0678">Repressor</keyword>
<keyword id="KW-0804">Transcription</keyword>
<keyword id="KW-0805">Transcription regulation</keyword>
<keyword id="KW-0862">Zinc</keyword>
<comment type="function">
    <text evidence="1">Manganese-dependent repressor that controls a regulon of oxidative stress resistance and iron-storage proteins. May act as a hydrogen peroxide and organic hydroperoxide sensor (By similarity).</text>
</comment>
<comment type="subcellular location">
    <subcellularLocation>
        <location evidence="1">Cytoplasm</location>
    </subcellularLocation>
</comment>
<comment type="similarity">
    <text evidence="2">Belongs to the Fur family.</text>
</comment>
<protein>
    <recommendedName>
        <fullName>Peroxide-responsive repressor PerR</fullName>
    </recommendedName>
</protein>
<reference key="1">
    <citation type="journal article" date="2002" name="Lancet">
        <title>Genome and virulence determinants of high virulence community-acquired MRSA.</title>
        <authorList>
            <person name="Baba T."/>
            <person name="Takeuchi F."/>
            <person name="Kuroda M."/>
            <person name="Yuzawa H."/>
            <person name="Aoki K."/>
            <person name="Oguchi A."/>
            <person name="Nagai Y."/>
            <person name="Iwama N."/>
            <person name="Asano K."/>
            <person name="Naimi T."/>
            <person name="Kuroda H."/>
            <person name="Cui L."/>
            <person name="Yamamoto K."/>
            <person name="Hiramatsu K."/>
        </authorList>
    </citation>
    <scope>NUCLEOTIDE SEQUENCE [LARGE SCALE GENOMIC DNA]</scope>
    <source>
        <strain>MW2</strain>
    </source>
</reference>
<feature type="chain" id="PRO_0000289015" description="Peroxide-responsive repressor PerR">
    <location>
        <begin position="1"/>
        <end position="148"/>
    </location>
</feature>
<feature type="region of interest" description="DNA-binding" evidence="1">
    <location>
        <begin position="1"/>
        <end position="84"/>
    </location>
</feature>
<feature type="binding site" evidence="1">
    <location>
        <position position="102"/>
    </location>
    <ligand>
        <name>Zn(2+)</name>
        <dbReference type="ChEBI" id="CHEBI:29105"/>
    </ligand>
</feature>
<feature type="binding site" evidence="1">
    <location>
        <position position="105"/>
    </location>
    <ligand>
        <name>Zn(2+)</name>
        <dbReference type="ChEBI" id="CHEBI:29105"/>
    </ligand>
</feature>
<feature type="binding site" evidence="1">
    <location>
        <position position="142"/>
    </location>
    <ligand>
        <name>Zn(2+)</name>
        <dbReference type="ChEBI" id="CHEBI:29105"/>
    </ligand>
</feature>
<feature type="binding site" evidence="1">
    <location>
        <position position="145"/>
    </location>
    <ligand>
        <name>Zn(2+)</name>
        <dbReference type="ChEBI" id="CHEBI:29105"/>
    </ligand>
</feature>
<accession>Q7A0J4</accession>
<evidence type="ECO:0000250" key="1"/>
<evidence type="ECO:0000305" key="2"/>
<proteinExistence type="inferred from homology"/>
<sequence length="148" mass="17183">MSVEIESIEHELEESIASLRQAGVRITPQRQAILRYLISSHTHPTADEIYQALSPDFPNISVATIYNNLRVFKDIGIVKELTYGDSSSRFDFNTHNHYHIICEQCGKIVDFQYPQLNEIERLAQHMTDFDVTHHRMEIYGVCKECQDK</sequence>
<dbReference type="EMBL" id="BA000033">
    <property type="protein sequence ID" value="BAB95666.1"/>
    <property type="molecule type" value="Genomic_DNA"/>
</dbReference>
<dbReference type="RefSeq" id="WP_000110011.1">
    <property type="nucleotide sequence ID" value="NC_003923.1"/>
</dbReference>
<dbReference type="SMR" id="Q7A0J4"/>
<dbReference type="GeneID" id="98346243"/>
<dbReference type="KEGG" id="sam:MW1801"/>
<dbReference type="HOGENOM" id="CLU_096072_4_2_9"/>
<dbReference type="GO" id="GO:0005737">
    <property type="term" value="C:cytoplasm"/>
    <property type="evidence" value="ECO:0007669"/>
    <property type="project" value="UniProtKB-SubCell"/>
</dbReference>
<dbReference type="GO" id="GO:0003700">
    <property type="term" value="F:DNA-binding transcription factor activity"/>
    <property type="evidence" value="ECO:0007669"/>
    <property type="project" value="InterPro"/>
</dbReference>
<dbReference type="GO" id="GO:0000976">
    <property type="term" value="F:transcription cis-regulatory region binding"/>
    <property type="evidence" value="ECO:0007669"/>
    <property type="project" value="TreeGrafter"/>
</dbReference>
<dbReference type="GO" id="GO:0008270">
    <property type="term" value="F:zinc ion binding"/>
    <property type="evidence" value="ECO:0007669"/>
    <property type="project" value="TreeGrafter"/>
</dbReference>
<dbReference type="GO" id="GO:0045892">
    <property type="term" value="P:negative regulation of DNA-templated transcription"/>
    <property type="evidence" value="ECO:0007669"/>
    <property type="project" value="TreeGrafter"/>
</dbReference>
<dbReference type="GO" id="GO:1900376">
    <property type="term" value="P:regulation of secondary metabolite biosynthetic process"/>
    <property type="evidence" value="ECO:0007669"/>
    <property type="project" value="TreeGrafter"/>
</dbReference>
<dbReference type="CDD" id="cd07153">
    <property type="entry name" value="Fur_like"/>
    <property type="match status" value="1"/>
</dbReference>
<dbReference type="FunFam" id="1.10.10.10:FF:000147">
    <property type="entry name" value="Fur family transcriptional regulator"/>
    <property type="match status" value="1"/>
</dbReference>
<dbReference type="FunFam" id="3.30.1490.190:FF:000003">
    <property type="entry name" value="Fur family transcriptional regulator"/>
    <property type="match status" value="1"/>
</dbReference>
<dbReference type="Gene3D" id="3.30.1490.190">
    <property type="match status" value="1"/>
</dbReference>
<dbReference type="Gene3D" id="1.10.10.10">
    <property type="entry name" value="Winged helix-like DNA-binding domain superfamily/Winged helix DNA-binding domain"/>
    <property type="match status" value="1"/>
</dbReference>
<dbReference type="InterPro" id="IPR002481">
    <property type="entry name" value="FUR"/>
</dbReference>
<dbReference type="InterPro" id="IPR043135">
    <property type="entry name" value="Fur_C"/>
</dbReference>
<dbReference type="InterPro" id="IPR036388">
    <property type="entry name" value="WH-like_DNA-bd_sf"/>
</dbReference>
<dbReference type="InterPro" id="IPR036390">
    <property type="entry name" value="WH_DNA-bd_sf"/>
</dbReference>
<dbReference type="PANTHER" id="PTHR33202:SF8">
    <property type="entry name" value="PEROXIDE-RESPONSIVE REPRESSOR PERR"/>
    <property type="match status" value="1"/>
</dbReference>
<dbReference type="PANTHER" id="PTHR33202">
    <property type="entry name" value="ZINC UPTAKE REGULATION PROTEIN"/>
    <property type="match status" value="1"/>
</dbReference>
<dbReference type="Pfam" id="PF01475">
    <property type="entry name" value="FUR"/>
    <property type="match status" value="1"/>
</dbReference>
<dbReference type="SUPFAM" id="SSF46785">
    <property type="entry name" value="Winged helix' DNA-binding domain"/>
    <property type="match status" value="1"/>
</dbReference>
<gene>
    <name type="primary">perR</name>
    <name type="ordered locus">MW1801</name>
</gene>
<name>PERR_STAAW</name>